<proteinExistence type="inferred from homology"/>
<evidence type="ECO:0000250" key="1"/>
<evidence type="ECO:0000255" key="2">
    <source>
        <dbReference type="HAMAP-Rule" id="MF_01356"/>
    </source>
</evidence>
<feature type="chain" id="PRO_0000358342" description="NADH-quinone oxidoreductase subunit B 1">
    <location>
        <begin position="1"/>
        <end position="182"/>
    </location>
</feature>
<feature type="binding site" evidence="2">
    <location>
        <position position="47"/>
    </location>
    <ligand>
        <name>[4Fe-4S] cluster</name>
        <dbReference type="ChEBI" id="CHEBI:49883"/>
    </ligand>
</feature>
<feature type="binding site" evidence="2">
    <location>
        <position position="48"/>
    </location>
    <ligand>
        <name>[4Fe-4S] cluster</name>
        <dbReference type="ChEBI" id="CHEBI:49883"/>
    </ligand>
</feature>
<feature type="binding site" evidence="2">
    <location>
        <position position="113"/>
    </location>
    <ligand>
        <name>[4Fe-4S] cluster</name>
        <dbReference type="ChEBI" id="CHEBI:49883"/>
    </ligand>
</feature>
<feature type="binding site" evidence="2">
    <location>
        <position position="142"/>
    </location>
    <ligand>
        <name>[4Fe-4S] cluster</name>
        <dbReference type="ChEBI" id="CHEBI:49883"/>
    </ligand>
</feature>
<sequence>MASELDGLPVIATRREEAEGFLQGLVSKSLGWARKYSLFTYPFVTACCGMEYMTMASARYDSDRFGAAMPRFSPRQADLLMVVGTVNCKQAPILQRIYEQMADPKWVMAFGVCASSGGFYDNYATVQGIDRIIPVDVYVPGCPPRPEQVLDGIMLLQKKIQNQSHKLIDRKPLPVIAGGPGR</sequence>
<keyword id="KW-0004">4Fe-4S</keyword>
<keyword id="KW-0997">Cell inner membrane</keyword>
<keyword id="KW-1003">Cell membrane</keyword>
<keyword id="KW-0408">Iron</keyword>
<keyword id="KW-0411">Iron-sulfur</keyword>
<keyword id="KW-0472">Membrane</keyword>
<keyword id="KW-0479">Metal-binding</keyword>
<keyword id="KW-0520">NAD</keyword>
<keyword id="KW-0874">Quinone</keyword>
<keyword id="KW-1185">Reference proteome</keyword>
<keyword id="KW-1278">Translocase</keyword>
<keyword id="KW-0813">Transport</keyword>
<keyword id="KW-0830">Ubiquinone</keyword>
<dbReference type="EC" id="7.1.1.-" evidence="2"/>
<dbReference type="EMBL" id="CP000251">
    <property type="protein sequence ID" value="ABC82339.1"/>
    <property type="molecule type" value="Genomic_DNA"/>
</dbReference>
<dbReference type="RefSeq" id="WP_011421621.1">
    <property type="nucleotide sequence ID" value="NC_007760.1"/>
</dbReference>
<dbReference type="SMR" id="Q2IL12"/>
<dbReference type="STRING" id="290397.Adeh_2569"/>
<dbReference type="KEGG" id="ade:Adeh_2569"/>
<dbReference type="eggNOG" id="COG0377">
    <property type="taxonomic scope" value="Bacteria"/>
</dbReference>
<dbReference type="HOGENOM" id="CLU_055737_7_3_7"/>
<dbReference type="OrthoDB" id="9786737at2"/>
<dbReference type="Proteomes" id="UP000001935">
    <property type="component" value="Chromosome"/>
</dbReference>
<dbReference type="GO" id="GO:0005886">
    <property type="term" value="C:plasma membrane"/>
    <property type="evidence" value="ECO:0007669"/>
    <property type="project" value="UniProtKB-SubCell"/>
</dbReference>
<dbReference type="GO" id="GO:0045271">
    <property type="term" value="C:respiratory chain complex I"/>
    <property type="evidence" value="ECO:0007669"/>
    <property type="project" value="TreeGrafter"/>
</dbReference>
<dbReference type="GO" id="GO:0051539">
    <property type="term" value="F:4 iron, 4 sulfur cluster binding"/>
    <property type="evidence" value="ECO:0007669"/>
    <property type="project" value="UniProtKB-KW"/>
</dbReference>
<dbReference type="GO" id="GO:0005506">
    <property type="term" value="F:iron ion binding"/>
    <property type="evidence" value="ECO:0007669"/>
    <property type="project" value="UniProtKB-UniRule"/>
</dbReference>
<dbReference type="GO" id="GO:0008137">
    <property type="term" value="F:NADH dehydrogenase (ubiquinone) activity"/>
    <property type="evidence" value="ECO:0007669"/>
    <property type="project" value="InterPro"/>
</dbReference>
<dbReference type="GO" id="GO:0050136">
    <property type="term" value="F:NADH:ubiquinone reductase (non-electrogenic) activity"/>
    <property type="evidence" value="ECO:0007669"/>
    <property type="project" value="UniProtKB-UniRule"/>
</dbReference>
<dbReference type="GO" id="GO:0048038">
    <property type="term" value="F:quinone binding"/>
    <property type="evidence" value="ECO:0007669"/>
    <property type="project" value="UniProtKB-KW"/>
</dbReference>
<dbReference type="GO" id="GO:0009060">
    <property type="term" value="P:aerobic respiration"/>
    <property type="evidence" value="ECO:0007669"/>
    <property type="project" value="TreeGrafter"/>
</dbReference>
<dbReference type="GO" id="GO:0015990">
    <property type="term" value="P:electron transport coupled proton transport"/>
    <property type="evidence" value="ECO:0007669"/>
    <property type="project" value="TreeGrafter"/>
</dbReference>
<dbReference type="FunFam" id="3.40.50.12280:FF:000002">
    <property type="entry name" value="NADH-quinone oxidoreductase subunit B"/>
    <property type="match status" value="1"/>
</dbReference>
<dbReference type="Gene3D" id="3.40.50.12280">
    <property type="match status" value="1"/>
</dbReference>
<dbReference type="HAMAP" id="MF_01356">
    <property type="entry name" value="NDH1_NuoB"/>
    <property type="match status" value="1"/>
</dbReference>
<dbReference type="InterPro" id="IPR006137">
    <property type="entry name" value="NADH_UbQ_OxRdtase-like_20kDa"/>
</dbReference>
<dbReference type="InterPro" id="IPR006138">
    <property type="entry name" value="NADH_UQ_OxRdtase_20Kd_su"/>
</dbReference>
<dbReference type="NCBIfam" id="TIGR01957">
    <property type="entry name" value="nuoB_fam"/>
    <property type="match status" value="1"/>
</dbReference>
<dbReference type="NCBIfam" id="NF005012">
    <property type="entry name" value="PRK06411.1"/>
    <property type="match status" value="1"/>
</dbReference>
<dbReference type="NCBIfam" id="NF011392">
    <property type="entry name" value="PRK14817.1"/>
    <property type="match status" value="1"/>
</dbReference>
<dbReference type="PANTHER" id="PTHR11995">
    <property type="entry name" value="NADH DEHYDROGENASE"/>
    <property type="match status" value="1"/>
</dbReference>
<dbReference type="PANTHER" id="PTHR11995:SF14">
    <property type="entry name" value="NADH DEHYDROGENASE [UBIQUINONE] IRON-SULFUR PROTEIN 7, MITOCHONDRIAL"/>
    <property type="match status" value="1"/>
</dbReference>
<dbReference type="Pfam" id="PF01058">
    <property type="entry name" value="Oxidored_q6"/>
    <property type="match status" value="1"/>
</dbReference>
<dbReference type="SUPFAM" id="SSF56770">
    <property type="entry name" value="HydA/Nqo6-like"/>
    <property type="match status" value="1"/>
</dbReference>
<dbReference type="PROSITE" id="PS01150">
    <property type="entry name" value="COMPLEX1_20K"/>
    <property type="match status" value="1"/>
</dbReference>
<name>NUOB1_ANADE</name>
<gene>
    <name evidence="2" type="primary">nuoB1</name>
    <name type="ordered locus">Adeh_2569</name>
</gene>
<accession>Q2IL12</accession>
<comment type="function">
    <text evidence="1">NDH-1 shuttles electrons from NADH, via FMN and iron-sulfur (Fe-S) centers, to quinones in the respiratory chain. Couples the redox reaction to proton translocation (for every two electrons transferred, four hydrogen ions are translocated across the cytoplasmic membrane), and thus conserves the redox energy in a proton gradient (By similarity).</text>
</comment>
<comment type="catalytic activity">
    <reaction evidence="2">
        <text>a quinone + NADH + 5 H(+)(in) = a quinol + NAD(+) + 4 H(+)(out)</text>
        <dbReference type="Rhea" id="RHEA:57888"/>
        <dbReference type="ChEBI" id="CHEBI:15378"/>
        <dbReference type="ChEBI" id="CHEBI:24646"/>
        <dbReference type="ChEBI" id="CHEBI:57540"/>
        <dbReference type="ChEBI" id="CHEBI:57945"/>
        <dbReference type="ChEBI" id="CHEBI:132124"/>
    </reaction>
</comment>
<comment type="cofactor">
    <cofactor evidence="2">
        <name>[4Fe-4S] cluster</name>
        <dbReference type="ChEBI" id="CHEBI:49883"/>
    </cofactor>
    <text evidence="2">Binds 1 [4Fe-4S] cluster.</text>
</comment>
<comment type="subunit">
    <text evidence="2">NDH-1 is composed of 14 different subunits. Subunits NuoB, C, D, E, F, and G constitute the peripheral sector of the complex.</text>
</comment>
<comment type="subcellular location">
    <subcellularLocation>
        <location evidence="2">Cell inner membrane</location>
        <topology evidence="2">Peripheral membrane protein</topology>
        <orientation evidence="2">Cytoplasmic side</orientation>
    </subcellularLocation>
</comment>
<comment type="similarity">
    <text evidence="2">Belongs to the complex I 20 kDa subunit family.</text>
</comment>
<reference key="1">
    <citation type="submission" date="2006-01" db="EMBL/GenBank/DDBJ databases">
        <title>Complete sequence of Anaeromyxobacter dehalogenans 2CP-C.</title>
        <authorList>
            <person name="Copeland A."/>
            <person name="Lucas S."/>
            <person name="Lapidus A."/>
            <person name="Barry K."/>
            <person name="Detter J.C."/>
            <person name="Glavina T."/>
            <person name="Hammon N."/>
            <person name="Israni S."/>
            <person name="Pitluck S."/>
            <person name="Brettin T."/>
            <person name="Bruce D."/>
            <person name="Han C."/>
            <person name="Tapia R."/>
            <person name="Gilna P."/>
            <person name="Kiss H."/>
            <person name="Schmutz J."/>
            <person name="Larimer F."/>
            <person name="Land M."/>
            <person name="Kyrpides N."/>
            <person name="Anderson I."/>
            <person name="Sanford R.A."/>
            <person name="Ritalahti K.M."/>
            <person name="Thomas H.S."/>
            <person name="Kirby J.R."/>
            <person name="Zhulin I.B."/>
            <person name="Loeffler F.E."/>
            <person name="Richardson P."/>
        </authorList>
    </citation>
    <scope>NUCLEOTIDE SEQUENCE [LARGE SCALE GENOMIC DNA]</scope>
    <source>
        <strain>2CP-C</strain>
    </source>
</reference>
<organism>
    <name type="scientific">Anaeromyxobacter dehalogenans (strain 2CP-C)</name>
    <dbReference type="NCBI Taxonomy" id="290397"/>
    <lineage>
        <taxon>Bacteria</taxon>
        <taxon>Pseudomonadati</taxon>
        <taxon>Myxococcota</taxon>
        <taxon>Myxococcia</taxon>
        <taxon>Myxococcales</taxon>
        <taxon>Cystobacterineae</taxon>
        <taxon>Anaeromyxobacteraceae</taxon>
        <taxon>Anaeromyxobacter</taxon>
    </lineage>
</organism>
<protein>
    <recommendedName>
        <fullName evidence="2">NADH-quinone oxidoreductase subunit B 1</fullName>
        <ecNumber evidence="2">7.1.1.-</ecNumber>
    </recommendedName>
    <alternativeName>
        <fullName evidence="2">NADH dehydrogenase I subunit B 1</fullName>
    </alternativeName>
    <alternativeName>
        <fullName evidence="2">NDH-1 subunit B 1</fullName>
    </alternativeName>
</protein>